<sequence>MTEETDLEDLRRGTDLVKRGFAKMQKGGVIMDVVNREQARIAEDAGAVAVMHLESVPADIRKRGGVARMADPSKLEEIIEEVSIPVMGKARIGHTAEAQILEAAGADMVDESEVLTQADDRYHIDKREFTAPFVCGARNLAEALRRIDEGAAMIRTKGEAGTGDVNQAVTHQRNIQRSIGKLEGMAYEERDEWAREHGAPRRLVHETADRGRLPVVNFAAGGIATPADAALMMQHGCDGIFVGSGIFGAENPQAMGESVVAAVNNYDDPEQLKEIAKNPGKGMKGQANADLDEEEQLQGRGV</sequence>
<reference key="1">
    <citation type="journal article" date="2004" name="Genome Res.">
        <title>Genome sequence of Haloarcula marismortui: a halophilic archaeon from the Dead Sea.</title>
        <authorList>
            <person name="Baliga N.S."/>
            <person name="Bonneau R."/>
            <person name="Facciotti M.T."/>
            <person name="Pan M."/>
            <person name="Glusman G."/>
            <person name="Deutsch E.W."/>
            <person name="Shannon P."/>
            <person name="Chiu Y."/>
            <person name="Weng R.S."/>
            <person name="Gan R.R."/>
            <person name="Hung P."/>
            <person name="Date S.V."/>
            <person name="Marcotte E."/>
            <person name="Hood L."/>
            <person name="Ng W.V."/>
        </authorList>
    </citation>
    <scope>NUCLEOTIDE SEQUENCE [LARGE SCALE GENOMIC DNA]</scope>
    <source>
        <strain>ATCC 43049 / DSM 3752 / JCM 8966 / VKM B-1809</strain>
    </source>
</reference>
<accession>Q5V1G7</accession>
<name>PDXS_HALMA</name>
<keyword id="KW-0456">Lyase</keyword>
<keyword id="KW-0663">Pyridoxal phosphate</keyword>
<keyword id="KW-1185">Reference proteome</keyword>
<keyword id="KW-0704">Schiff base</keyword>
<gene>
    <name evidence="1" type="primary">pdxS</name>
    <name type="ordered locus">rrnAC1732</name>
</gene>
<organism>
    <name type="scientific">Haloarcula marismortui (strain ATCC 43049 / DSM 3752 / JCM 8966 / VKM B-1809)</name>
    <name type="common">Halobacterium marismortui</name>
    <dbReference type="NCBI Taxonomy" id="272569"/>
    <lineage>
        <taxon>Archaea</taxon>
        <taxon>Methanobacteriati</taxon>
        <taxon>Methanobacteriota</taxon>
        <taxon>Stenosarchaea group</taxon>
        <taxon>Halobacteria</taxon>
        <taxon>Halobacteriales</taxon>
        <taxon>Haloarculaceae</taxon>
        <taxon>Haloarcula</taxon>
    </lineage>
</organism>
<dbReference type="EC" id="4.3.3.6" evidence="1"/>
<dbReference type="EMBL" id="AY596297">
    <property type="protein sequence ID" value="AAV46635.1"/>
    <property type="molecule type" value="Genomic_DNA"/>
</dbReference>
<dbReference type="RefSeq" id="WP_004957745.1">
    <property type="nucleotide sequence ID" value="NZ_CP039138.1"/>
</dbReference>
<dbReference type="SMR" id="Q5V1G7"/>
<dbReference type="STRING" id="272569.rrnAC1732"/>
<dbReference type="PaxDb" id="272569-rrnAC1732"/>
<dbReference type="EnsemblBacteria" id="AAV46635">
    <property type="protein sequence ID" value="AAV46635"/>
    <property type="gene ID" value="rrnAC1732"/>
</dbReference>
<dbReference type="GeneID" id="64821702"/>
<dbReference type="KEGG" id="hma:rrnAC1732"/>
<dbReference type="PATRIC" id="fig|272569.17.peg.2413"/>
<dbReference type="eggNOG" id="arCOG04075">
    <property type="taxonomic scope" value="Archaea"/>
</dbReference>
<dbReference type="HOGENOM" id="CLU_055352_1_0_2"/>
<dbReference type="UniPathway" id="UPA00245"/>
<dbReference type="Proteomes" id="UP000001169">
    <property type="component" value="Chromosome I"/>
</dbReference>
<dbReference type="GO" id="GO:0036381">
    <property type="term" value="F:pyridoxal 5'-phosphate synthase (glutamine hydrolysing) activity"/>
    <property type="evidence" value="ECO:0007669"/>
    <property type="project" value="UniProtKB-UniRule"/>
</dbReference>
<dbReference type="GO" id="GO:0006520">
    <property type="term" value="P:amino acid metabolic process"/>
    <property type="evidence" value="ECO:0007669"/>
    <property type="project" value="TreeGrafter"/>
</dbReference>
<dbReference type="GO" id="GO:0042823">
    <property type="term" value="P:pyridoxal phosphate biosynthetic process"/>
    <property type="evidence" value="ECO:0007669"/>
    <property type="project" value="UniProtKB-UniRule"/>
</dbReference>
<dbReference type="GO" id="GO:0008615">
    <property type="term" value="P:pyridoxine biosynthetic process"/>
    <property type="evidence" value="ECO:0007669"/>
    <property type="project" value="TreeGrafter"/>
</dbReference>
<dbReference type="CDD" id="cd04727">
    <property type="entry name" value="pdxS"/>
    <property type="match status" value="1"/>
</dbReference>
<dbReference type="FunFam" id="3.20.20.70:FF:000001">
    <property type="entry name" value="Pyridoxine biosynthesis protein PDX1"/>
    <property type="match status" value="1"/>
</dbReference>
<dbReference type="Gene3D" id="3.20.20.70">
    <property type="entry name" value="Aldolase class I"/>
    <property type="match status" value="1"/>
</dbReference>
<dbReference type="HAMAP" id="MF_01824">
    <property type="entry name" value="PdxS"/>
    <property type="match status" value="1"/>
</dbReference>
<dbReference type="InterPro" id="IPR013785">
    <property type="entry name" value="Aldolase_TIM"/>
</dbReference>
<dbReference type="InterPro" id="IPR001852">
    <property type="entry name" value="PdxS/SNZ"/>
</dbReference>
<dbReference type="InterPro" id="IPR033755">
    <property type="entry name" value="PdxS/SNZ_N"/>
</dbReference>
<dbReference type="InterPro" id="IPR011060">
    <property type="entry name" value="RibuloseP-bd_barrel"/>
</dbReference>
<dbReference type="NCBIfam" id="NF003215">
    <property type="entry name" value="PRK04180.1"/>
    <property type="match status" value="1"/>
</dbReference>
<dbReference type="PANTHER" id="PTHR31829">
    <property type="entry name" value="PYRIDOXAL 5'-PHOSPHATE SYNTHASE SUBUNIT SNZ1-RELATED"/>
    <property type="match status" value="1"/>
</dbReference>
<dbReference type="PANTHER" id="PTHR31829:SF0">
    <property type="entry name" value="PYRIDOXAL 5'-PHOSPHATE SYNTHASE SUBUNIT SNZ1-RELATED"/>
    <property type="match status" value="1"/>
</dbReference>
<dbReference type="Pfam" id="PF01680">
    <property type="entry name" value="SOR_SNZ"/>
    <property type="match status" value="1"/>
</dbReference>
<dbReference type="PIRSF" id="PIRSF029271">
    <property type="entry name" value="Pdx1"/>
    <property type="match status" value="1"/>
</dbReference>
<dbReference type="SUPFAM" id="SSF51366">
    <property type="entry name" value="Ribulose-phoshate binding barrel"/>
    <property type="match status" value="1"/>
</dbReference>
<dbReference type="PROSITE" id="PS01235">
    <property type="entry name" value="PDXS_SNZ_1"/>
    <property type="match status" value="1"/>
</dbReference>
<dbReference type="PROSITE" id="PS51129">
    <property type="entry name" value="PDXS_SNZ_2"/>
    <property type="match status" value="1"/>
</dbReference>
<comment type="function">
    <text evidence="1">Catalyzes the formation of pyridoxal 5'-phosphate from ribose 5-phosphate (RBP), glyceraldehyde 3-phosphate (G3P) and ammonia. The ammonia is provided by the PdxT subunit. Can also use ribulose 5-phosphate and dihydroxyacetone phosphate as substrates, resulting from enzyme-catalyzed isomerization of RBP and G3P, respectively.</text>
</comment>
<comment type="catalytic activity">
    <reaction evidence="1">
        <text>aldehydo-D-ribose 5-phosphate + D-glyceraldehyde 3-phosphate + L-glutamine = pyridoxal 5'-phosphate + L-glutamate + phosphate + 3 H2O + H(+)</text>
        <dbReference type="Rhea" id="RHEA:31507"/>
        <dbReference type="ChEBI" id="CHEBI:15377"/>
        <dbReference type="ChEBI" id="CHEBI:15378"/>
        <dbReference type="ChEBI" id="CHEBI:29985"/>
        <dbReference type="ChEBI" id="CHEBI:43474"/>
        <dbReference type="ChEBI" id="CHEBI:58273"/>
        <dbReference type="ChEBI" id="CHEBI:58359"/>
        <dbReference type="ChEBI" id="CHEBI:59776"/>
        <dbReference type="ChEBI" id="CHEBI:597326"/>
        <dbReference type="EC" id="4.3.3.6"/>
    </reaction>
</comment>
<comment type="pathway">
    <text evidence="1">Cofactor biosynthesis; pyridoxal 5'-phosphate biosynthesis.</text>
</comment>
<comment type="subunit">
    <text evidence="1">In the presence of PdxT, forms a dodecamer of heterodimers.</text>
</comment>
<comment type="similarity">
    <text evidence="1">Belongs to the PdxS/SNZ family.</text>
</comment>
<feature type="chain" id="PRO_0000109432" description="Pyridoxal 5'-phosphate synthase subunit PdxS">
    <location>
        <begin position="1"/>
        <end position="302"/>
    </location>
</feature>
<feature type="region of interest" description="Disordered" evidence="2">
    <location>
        <begin position="275"/>
        <end position="302"/>
    </location>
</feature>
<feature type="active site" description="Schiff-base intermediate with D-ribose 5-phosphate" evidence="1">
    <location>
        <position position="89"/>
    </location>
</feature>
<feature type="binding site" evidence="1">
    <location>
        <position position="32"/>
    </location>
    <ligand>
        <name>D-ribose 5-phosphate</name>
        <dbReference type="ChEBI" id="CHEBI:78346"/>
    </ligand>
</feature>
<feature type="binding site" evidence="1">
    <location>
        <position position="161"/>
    </location>
    <ligand>
        <name>D-ribose 5-phosphate</name>
        <dbReference type="ChEBI" id="CHEBI:78346"/>
    </ligand>
</feature>
<feature type="binding site" evidence="1">
    <location>
        <position position="173"/>
    </location>
    <ligand>
        <name>D-glyceraldehyde 3-phosphate</name>
        <dbReference type="ChEBI" id="CHEBI:59776"/>
    </ligand>
</feature>
<feature type="binding site" evidence="1">
    <location>
        <position position="222"/>
    </location>
    <ligand>
        <name>D-ribose 5-phosphate</name>
        <dbReference type="ChEBI" id="CHEBI:78346"/>
    </ligand>
</feature>
<feature type="binding site" evidence="1">
    <location>
        <begin position="243"/>
        <end position="244"/>
    </location>
    <ligand>
        <name>D-ribose 5-phosphate</name>
        <dbReference type="ChEBI" id="CHEBI:78346"/>
    </ligand>
</feature>
<evidence type="ECO:0000255" key="1">
    <source>
        <dbReference type="HAMAP-Rule" id="MF_01824"/>
    </source>
</evidence>
<evidence type="ECO:0000256" key="2">
    <source>
        <dbReference type="SAM" id="MobiDB-lite"/>
    </source>
</evidence>
<proteinExistence type="inferred from homology"/>
<protein>
    <recommendedName>
        <fullName evidence="1">Pyridoxal 5'-phosphate synthase subunit PdxS</fullName>
        <shortName evidence="1">PLP synthase subunit PdxS</shortName>
        <ecNumber evidence="1">4.3.3.6</ecNumber>
    </recommendedName>
    <alternativeName>
        <fullName evidence="1">Pdx1</fullName>
    </alternativeName>
</protein>